<accession>F4HTV6</accession>
<accession>Q9C906</accession>
<sequence length="302" mass="33464">MNLTTNGFQRNLPSSLGNMEMIEFLDISHNSFHGKLPRSFLKGCDSLIVLKLSHKKLSEEVFPEASNFFSILELSMDNNLFTGKIGRGLQSLRSLIMLDISNNNLSGVIPSWFDQLQDLHSLQISNNLLEGEVPISLFNMSSLQLLALSANSLSGDLPQAISGYGALKVLLLRDNNLSGVIPDTLLGKNIIVLDLRNNRLSGNIPEFINTQYIRILLLRGNNLTGSIPRRLCAVRSIHLLDLANNKLNGSIPSCLRNASLGLGRGGYIRRLFIIITFFLWEHLSVHFSNLCSCKMGLLSIMS</sequence>
<proteinExistence type="uncertain"/>
<name>RLP16_ARATH</name>
<feature type="chain" id="PRO_0000443479" description="Putative receptor-like protein 16">
    <location>
        <begin position="1"/>
        <end position="302"/>
    </location>
</feature>
<feature type="repeat" description="LRR 1" evidence="1">
    <location>
        <begin position="1"/>
        <end position="19"/>
    </location>
</feature>
<feature type="repeat" description="LRR 2" evidence="1">
    <location>
        <begin position="20"/>
        <end position="43"/>
    </location>
</feature>
<feature type="repeat" description="LRR 3" evidence="1">
    <location>
        <begin position="45"/>
        <end position="70"/>
    </location>
</feature>
<feature type="repeat" description="LRR 4; degenerate" evidence="3">
    <location>
        <begin position="72"/>
        <end position="91"/>
    </location>
</feature>
<feature type="repeat" description="LRR 5" evidence="1">
    <location>
        <begin position="92"/>
        <end position="115"/>
    </location>
</feature>
<feature type="repeat" description="LRR 6" evidence="1">
    <location>
        <begin position="116"/>
        <end position="140"/>
    </location>
</feature>
<feature type="repeat" description="LRR 7" evidence="1">
    <location>
        <begin position="142"/>
        <end position="164"/>
    </location>
</feature>
<feature type="repeat" description="LRR 8" evidence="1">
    <location>
        <begin position="166"/>
        <end position="188"/>
    </location>
</feature>
<feature type="repeat" description="LRR 9" evidence="1">
    <location>
        <begin position="190"/>
        <end position="211"/>
    </location>
</feature>
<feature type="repeat" description="LRR 10" evidence="1">
    <location>
        <begin position="213"/>
        <end position="234"/>
    </location>
</feature>
<feature type="repeat" description="LRR 11" evidence="1">
    <location>
        <begin position="235"/>
        <end position="258"/>
    </location>
</feature>
<keyword id="KW-0433">Leucine-rich repeat</keyword>
<keyword id="KW-0675">Receptor</keyword>
<keyword id="KW-1185">Reference proteome</keyword>
<keyword id="KW-0677">Repeat</keyword>
<dbReference type="EMBL" id="AC020579">
    <property type="protein sequence ID" value="AAG52408.1"/>
    <property type="status" value="ALT_SEQ"/>
    <property type="molecule type" value="Genomic_DNA"/>
</dbReference>
<dbReference type="EMBL" id="CP002684">
    <property type="protein sequence ID" value="AEE35565.1"/>
    <property type="molecule type" value="Genomic_DNA"/>
</dbReference>
<dbReference type="EMBL" id="CP002684">
    <property type="protein sequence ID" value="ANM59089.1"/>
    <property type="molecule type" value="Genomic_DNA"/>
</dbReference>
<dbReference type="EMBL" id="CP002684">
    <property type="protein sequence ID" value="ANM59090.1"/>
    <property type="molecule type" value="Genomic_DNA"/>
</dbReference>
<dbReference type="EMBL" id="AF360276">
    <property type="status" value="NOT_ANNOTATED_CDS"/>
    <property type="molecule type" value="mRNA"/>
</dbReference>
<dbReference type="PIR" id="C96770">
    <property type="entry name" value="C96770"/>
</dbReference>
<dbReference type="RefSeq" id="NP_001321481.1">
    <property type="nucleotide sequence ID" value="NM_001334636.1"/>
</dbReference>
<dbReference type="RefSeq" id="NP_001321482.1">
    <property type="nucleotide sequence ID" value="NM_001334637.1"/>
</dbReference>
<dbReference type="RefSeq" id="NP_177560.2">
    <property type="nucleotide sequence ID" value="NM_106080.2"/>
</dbReference>
<dbReference type="SMR" id="F4HTV6"/>
<dbReference type="FunCoup" id="F4HTV6">
    <property type="interactions" value="3"/>
</dbReference>
<dbReference type="IntAct" id="F4HTV6">
    <property type="interactions" value="6"/>
</dbReference>
<dbReference type="STRING" id="3702.F4HTV6"/>
<dbReference type="iPTMnet" id="F4HTV6"/>
<dbReference type="PaxDb" id="3702-AT1G74200.1"/>
<dbReference type="EnsemblPlants" id="AT1G74200.1">
    <property type="protein sequence ID" value="AT1G74200.1"/>
    <property type="gene ID" value="AT1G74200"/>
</dbReference>
<dbReference type="EnsemblPlants" id="AT1G74200.2">
    <property type="protein sequence ID" value="AT1G74200.2"/>
    <property type="gene ID" value="AT1G74200"/>
</dbReference>
<dbReference type="EnsemblPlants" id="AT1G74200.3">
    <property type="protein sequence ID" value="AT1G74200.3"/>
    <property type="gene ID" value="AT1G74200"/>
</dbReference>
<dbReference type="GeneID" id="843760"/>
<dbReference type="Gramene" id="AT1G74200.1">
    <property type="protein sequence ID" value="AT1G74200.1"/>
    <property type="gene ID" value="AT1G74200"/>
</dbReference>
<dbReference type="Gramene" id="AT1G74200.2">
    <property type="protein sequence ID" value="AT1G74200.2"/>
    <property type="gene ID" value="AT1G74200"/>
</dbReference>
<dbReference type="Gramene" id="AT1G74200.3">
    <property type="protein sequence ID" value="AT1G74200.3"/>
    <property type="gene ID" value="AT1G74200"/>
</dbReference>
<dbReference type="KEGG" id="ath:AT1G74200"/>
<dbReference type="Araport" id="AT1G74200"/>
<dbReference type="TAIR" id="AT1G74200">
    <property type="gene designation" value="RLP16"/>
</dbReference>
<dbReference type="eggNOG" id="KOG0619">
    <property type="taxonomic scope" value="Eukaryota"/>
</dbReference>
<dbReference type="HOGENOM" id="CLU_000288_18_22_1"/>
<dbReference type="InParanoid" id="F4HTV6"/>
<dbReference type="OMA" id="WGLEYIN"/>
<dbReference type="Proteomes" id="UP000006548">
    <property type="component" value="Chromosome 1"/>
</dbReference>
<dbReference type="ExpressionAtlas" id="F4HTV6">
    <property type="expression patterns" value="baseline and differential"/>
</dbReference>
<dbReference type="FunFam" id="3.80.10.10:FF:000383">
    <property type="entry name" value="Leucine-rich repeat receptor protein kinase EMS1"/>
    <property type="match status" value="1"/>
</dbReference>
<dbReference type="Gene3D" id="3.80.10.10">
    <property type="entry name" value="Ribonuclease Inhibitor"/>
    <property type="match status" value="1"/>
</dbReference>
<dbReference type="InterPro" id="IPR001611">
    <property type="entry name" value="Leu-rich_rpt"/>
</dbReference>
<dbReference type="InterPro" id="IPR032675">
    <property type="entry name" value="LRR_dom_sf"/>
</dbReference>
<dbReference type="InterPro" id="IPR051502">
    <property type="entry name" value="RLP_Defense_Trigger"/>
</dbReference>
<dbReference type="PANTHER" id="PTHR48062:SF64">
    <property type="entry name" value="RECEPTOR-LIKE PROTEIN 13"/>
    <property type="match status" value="1"/>
</dbReference>
<dbReference type="PANTHER" id="PTHR48062">
    <property type="entry name" value="RECEPTOR-LIKE PROTEIN 14"/>
    <property type="match status" value="1"/>
</dbReference>
<dbReference type="Pfam" id="PF00560">
    <property type="entry name" value="LRR_1"/>
    <property type="match status" value="5"/>
</dbReference>
<dbReference type="Pfam" id="PF13855">
    <property type="entry name" value="LRR_8"/>
    <property type="match status" value="1"/>
</dbReference>
<dbReference type="PRINTS" id="PR00019">
    <property type="entry name" value="LEURICHRPT"/>
</dbReference>
<dbReference type="SUPFAM" id="SSF52058">
    <property type="entry name" value="L domain-like"/>
    <property type="match status" value="1"/>
</dbReference>
<evidence type="ECO:0000255" key="1"/>
<evidence type="ECO:0000303" key="2">
    <source>
    </source>
</evidence>
<evidence type="ECO:0000305" key="3"/>
<evidence type="ECO:0000312" key="4">
    <source>
        <dbReference type="Araport" id="AT1G74200"/>
    </source>
</evidence>
<evidence type="ECO:0000312" key="5">
    <source>
        <dbReference type="EMBL" id="AAG52408.1"/>
    </source>
</evidence>
<comment type="similarity">
    <text evidence="3">Belongs to the RLP family.</text>
</comment>
<comment type="caution">
    <text evidence="3">Could be the product of a pseudogene. Lacks the signal peptide and the transmembrane domain, which are conserved features of the family.</text>
</comment>
<comment type="sequence caution" evidence="3">
    <conflict type="erroneous gene model prediction">
        <sequence resource="EMBL-CDS" id="AAG52408"/>
    </conflict>
</comment>
<reference key="1">
    <citation type="journal article" date="2000" name="Nature">
        <title>Sequence and analysis of chromosome 1 of the plant Arabidopsis thaliana.</title>
        <authorList>
            <person name="Theologis A."/>
            <person name="Ecker J.R."/>
            <person name="Palm C.J."/>
            <person name="Federspiel N.A."/>
            <person name="Kaul S."/>
            <person name="White O."/>
            <person name="Alonso J."/>
            <person name="Altafi H."/>
            <person name="Araujo R."/>
            <person name="Bowman C.L."/>
            <person name="Brooks S.Y."/>
            <person name="Buehler E."/>
            <person name="Chan A."/>
            <person name="Chao Q."/>
            <person name="Chen H."/>
            <person name="Cheuk R.F."/>
            <person name="Chin C.W."/>
            <person name="Chung M.K."/>
            <person name="Conn L."/>
            <person name="Conway A.B."/>
            <person name="Conway A.R."/>
            <person name="Creasy T.H."/>
            <person name="Dewar K."/>
            <person name="Dunn P."/>
            <person name="Etgu P."/>
            <person name="Feldblyum T.V."/>
            <person name="Feng J.-D."/>
            <person name="Fong B."/>
            <person name="Fujii C.Y."/>
            <person name="Gill J.E."/>
            <person name="Goldsmith A.D."/>
            <person name="Haas B."/>
            <person name="Hansen N.F."/>
            <person name="Hughes B."/>
            <person name="Huizar L."/>
            <person name="Hunter J.L."/>
            <person name="Jenkins J."/>
            <person name="Johnson-Hopson C."/>
            <person name="Khan S."/>
            <person name="Khaykin E."/>
            <person name="Kim C.J."/>
            <person name="Koo H.L."/>
            <person name="Kremenetskaia I."/>
            <person name="Kurtz D.B."/>
            <person name="Kwan A."/>
            <person name="Lam B."/>
            <person name="Langin-Hooper S."/>
            <person name="Lee A."/>
            <person name="Lee J.M."/>
            <person name="Lenz C.A."/>
            <person name="Li J.H."/>
            <person name="Li Y.-P."/>
            <person name="Lin X."/>
            <person name="Liu S.X."/>
            <person name="Liu Z.A."/>
            <person name="Luros J.S."/>
            <person name="Maiti R."/>
            <person name="Marziali A."/>
            <person name="Militscher J."/>
            <person name="Miranda M."/>
            <person name="Nguyen M."/>
            <person name="Nierman W.C."/>
            <person name="Osborne B.I."/>
            <person name="Pai G."/>
            <person name="Peterson J."/>
            <person name="Pham P.K."/>
            <person name="Rizzo M."/>
            <person name="Rooney T."/>
            <person name="Rowley D."/>
            <person name="Sakano H."/>
            <person name="Salzberg S.L."/>
            <person name="Schwartz J.R."/>
            <person name="Shinn P."/>
            <person name="Southwick A.M."/>
            <person name="Sun H."/>
            <person name="Tallon L.J."/>
            <person name="Tambunga G."/>
            <person name="Toriumi M.J."/>
            <person name="Town C.D."/>
            <person name="Utterback T."/>
            <person name="Van Aken S."/>
            <person name="Vaysberg M."/>
            <person name="Vysotskaia V.S."/>
            <person name="Walker M."/>
            <person name="Wu D."/>
            <person name="Yu G."/>
            <person name="Fraser C.M."/>
            <person name="Venter J.C."/>
            <person name="Davis R.W."/>
        </authorList>
    </citation>
    <scope>NUCLEOTIDE SEQUENCE [LARGE SCALE GENOMIC DNA]</scope>
    <source>
        <strain>cv. Columbia</strain>
    </source>
</reference>
<reference key="2">
    <citation type="journal article" date="2017" name="Plant J.">
        <title>Araport11: a complete reannotation of the Arabidopsis thaliana reference genome.</title>
        <authorList>
            <person name="Cheng C.Y."/>
            <person name="Krishnakumar V."/>
            <person name="Chan A.P."/>
            <person name="Thibaud-Nissen F."/>
            <person name="Schobel S."/>
            <person name="Town C.D."/>
        </authorList>
    </citation>
    <scope>GENOME REANNOTATION</scope>
    <source>
        <strain>cv. Columbia</strain>
    </source>
</reference>
<reference key="3">
    <citation type="journal article" date="2003" name="Science">
        <title>Empirical analysis of transcriptional activity in the Arabidopsis genome.</title>
        <authorList>
            <person name="Yamada K."/>
            <person name="Lim J."/>
            <person name="Dale J.M."/>
            <person name="Chen H."/>
            <person name="Shinn P."/>
            <person name="Palm C.J."/>
            <person name="Southwick A.M."/>
            <person name="Wu H.C."/>
            <person name="Kim C.J."/>
            <person name="Nguyen M."/>
            <person name="Pham P.K."/>
            <person name="Cheuk R.F."/>
            <person name="Karlin-Newmann G."/>
            <person name="Liu S.X."/>
            <person name="Lam B."/>
            <person name="Sakano H."/>
            <person name="Wu T."/>
            <person name="Yu G."/>
            <person name="Miranda M."/>
            <person name="Quach H.L."/>
            <person name="Tripp M."/>
            <person name="Chang C.H."/>
            <person name="Lee J.M."/>
            <person name="Toriumi M.J."/>
            <person name="Chan M.M."/>
            <person name="Tang C.C."/>
            <person name="Onodera C.S."/>
            <person name="Deng J.M."/>
            <person name="Akiyama K."/>
            <person name="Ansari Y."/>
            <person name="Arakawa T."/>
            <person name="Banh J."/>
            <person name="Banno F."/>
            <person name="Bowser L."/>
            <person name="Brooks S.Y."/>
            <person name="Carninci P."/>
            <person name="Chao Q."/>
            <person name="Choy N."/>
            <person name="Enju A."/>
            <person name="Goldsmith A.D."/>
            <person name="Gurjal M."/>
            <person name="Hansen N.F."/>
            <person name="Hayashizaki Y."/>
            <person name="Johnson-Hopson C."/>
            <person name="Hsuan V.W."/>
            <person name="Iida K."/>
            <person name="Karnes M."/>
            <person name="Khan S."/>
            <person name="Koesema E."/>
            <person name="Ishida J."/>
            <person name="Jiang P.X."/>
            <person name="Jones T."/>
            <person name="Kawai J."/>
            <person name="Kamiya A."/>
            <person name="Meyers C."/>
            <person name="Nakajima M."/>
            <person name="Narusaka M."/>
            <person name="Seki M."/>
            <person name="Sakurai T."/>
            <person name="Satou M."/>
            <person name="Tamse R."/>
            <person name="Vaysberg M."/>
            <person name="Wallender E.K."/>
            <person name="Wong C."/>
            <person name="Yamamura Y."/>
            <person name="Yuan S."/>
            <person name="Shinozaki K."/>
            <person name="Davis R.W."/>
            <person name="Theologis A."/>
            <person name="Ecker J.R."/>
        </authorList>
    </citation>
    <scope>NUCLEOTIDE SEQUENCE [LARGE SCALE MRNA]</scope>
    <source>
        <strain>cv. Columbia</strain>
    </source>
</reference>
<reference key="4">
    <citation type="journal article" date="2005" name="Plant Physiol.">
        <title>Phylogenomic analysis of the receptor-like proteins of rice and Arabidopsis.</title>
        <authorList>
            <person name="Fritz-Laylin L.K."/>
            <person name="Krishnamurthy N."/>
            <person name="Toer M."/>
            <person name="Sjoelander K.V."/>
            <person name="Jones J.D."/>
        </authorList>
    </citation>
    <scope>GENE FAMILY</scope>
</reference>
<reference key="5">
    <citation type="journal article" date="2008" name="Plant Physiol.">
        <title>A genome-wide functional investigation into the roles of receptor-like proteins in Arabidopsis.</title>
        <authorList>
            <person name="Wang G."/>
            <person name="Ellendorff U."/>
            <person name="Kemp B."/>
            <person name="Mansfield J.W."/>
            <person name="Forsyth A."/>
            <person name="Mitchell K."/>
            <person name="Bastas K."/>
            <person name="Liu C.-M."/>
            <person name="Woods-Toer A."/>
            <person name="Zipfel C."/>
            <person name="de Wit P.J.G.M."/>
            <person name="Jones J.D.G."/>
            <person name="Toer M."/>
            <person name="Thomma B.P.H.J."/>
        </authorList>
    </citation>
    <scope>GENE FAMILY</scope>
    <scope>NOMENCLATURE</scope>
</reference>
<gene>
    <name evidence="2" type="primary">RLP16</name>
    <name evidence="4" type="ordered locus">At1g74200</name>
    <name evidence="5" type="ORF">F1O17.13</name>
</gene>
<protein>
    <recommendedName>
        <fullName evidence="2">Putative receptor-like protein 16</fullName>
        <shortName evidence="2">AtRLP16</shortName>
    </recommendedName>
</protein>
<organism>
    <name type="scientific">Arabidopsis thaliana</name>
    <name type="common">Mouse-ear cress</name>
    <dbReference type="NCBI Taxonomy" id="3702"/>
    <lineage>
        <taxon>Eukaryota</taxon>
        <taxon>Viridiplantae</taxon>
        <taxon>Streptophyta</taxon>
        <taxon>Embryophyta</taxon>
        <taxon>Tracheophyta</taxon>
        <taxon>Spermatophyta</taxon>
        <taxon>Magnoliopsida</taxon>
        <taxon>eudicotyledons</taxon>
        <taxon>Gunneridae</taxon>
        <taxon>Pentapetalae</taxon>
        <taxon>rosids</taxon>
        <taxon>malvids</taxon>
        <taxon>Brassicales</taxon>
        <taxon>Brassicaceae</taxon>
        <taxon>Camelineae</taxon>
        <taxon>Arabidopsis</taxon>
    </lineage>
</organism>